<evidence type="ECO:0000255" key="1">
    <source>
        <dbReference type="HAMAP-Rule" id="MF_00578"/>
    </source>
</evidence>
<sequence length="520" mass="58853">MIPDVSTALSWLEANPQALKGIRRGVEREGLRINANGSLAQTPHPESLGSALTHKWITTDFAEALLEFITPVDDDIDHMLTLLRDIHRYVARRLGDERLWPMSMPCFIDSAQPIELAQYGSSNIGRMKTLYRKGLKNRYSALMQVIAGVHYNFSLPLAFWQAYAGIRDEASGKEAISAGYLRLIRNYYRFGWIILYLFGASPGICPSFLNGRKTDLLFEQAPSGLIYLPYATSLRLSDLGYTNKSQSQLNITFNHLDEYVRGLKQAIKTPSADYQRMGLQRGGHYLQLNTNVLQIENELYAPIRPKRVTRDDESPSDALMRGGIEYVEVRSLDINPFSPVGVDEEQARFLDLFLIWCTLAEAPEMSAEELRCTRTNWNRVILEGRKPGLMLGIDCGSTEQPLTILGKSLFSDLRRVAETLDSNNGDTHYQLVCDKLVAGFDNPELTLSARFMDQLIEHGIGGLGLILANDYRQTLRDEPLQVLNEAQLDEERLRSWQRQRSLEVADHLSFDEFLASQNGR</sequence>
<name>GSH1_SODGM</name>
<gene>
    <name evidence="1" type="primary">gshA</name>
    <name type="ordered locus">SG0541</name>
</gene>
<protein>
    <recommendedName>
        <fullName evidence="1">Glutamate--cysteine ligase</fullName>
        <ecNumber evidence="1">6.3.2.2</ecNumber>
    </recommendedName>
    <alternativeName>
        <fullName evidence="1">Gamma-ECS</fullName>
        <shortName evidence="1">GCS</shortName>
    </alternativeName>
    <alternativeName>
        <fullName evidence="1">Gamma-glutamylcysteine synthetase</fullName>
    </alternativeName>
</protein>
<comment type="catalytic activity">
    <reaction evidence="1">
        <text>L-cysteine + L-glutamate + ATP = gamma-L-glutamyl-L-cysteine + ADP + phosphate + H(+)</text>
        <dbReference type="Rhea" id="RHEA:13285"/>
        <dbReference type="ChEBI" id="CHEBI:15378"/>
        <dbReference type="ChEBI" id="CHEBI:29985"/>
        <dbReference type="ChEBI" id="CHEBI:30616"/>
        <dbReference type="ChEBI" id="CHEBI:35235"/>
        <dbReference type="ChEBI" id="CHEBI:43474"/>
        <dbReference type="ChEBI" id="CHEBI:58173"/>
        <dbReference type="ChEBI" id="CHEBI:456216"/>
        <dbReference type="EC" id="6.3.2.2"/>
    </reaction>
</comment>
<comment type="pathway">
    <text evidence="1">Sulfur metabolism; glutathione biosynthesis; glutathione from L-cysteine and L-glutamate: step 1/2.</text>
</comment>
<comment type="similarity">
    <text evidence="1">Belongs to the glutamate--cysteine ligase type 1 family. Type 1 subfamily.</text>
</comment>
<organism>
    <name type="scientific">Sodalis glossinidius (strain morsitans)</name>
    <dbReference type="NCBI Taxonomy" id="343509"/>
    <lineage>
        <taxon>Bacteria</taxon>
        <taxon>Pseudomonadati</taxon>
        <taxon>Pseudomonadota</taxon>
        <taxon>Gammaproteobacteria</taxon>
        <taxon>Enterobacterales</taxon>
        <taxon>Bruguierivoracaceae</taxon>
        <taxon>Sodalis</taxon>
    </lineage>
</organism>
<dbReference type="EC" id="6.3.2.2" evidence="1"/>
<dbReference type="EMBL" id="AP008232">
    <property type="protein sequence ID" value="BAE73816.1"/>
    <property type="molecule type" value="Genomic_DNA"/>
</dbReference>
<dbReference type="RefSeq" id="WP_011410514.1">
    <property type="nucleotide sequence ID" value="NC_007712.1"/>
</dbReference>
<dbReference type="SMR" id="Q2NVK9"/>
<dbReference type="STRING" id="343509.SG0541"/>
<dbReference type="KEGG" id="sgl:SG0541"/>
<dbReference type="eggNOG" id="COG2918">
    <property type="taxonomic scope" value="Bacteria"/>
</dbReference>
<dbReference type="HOGENOM" id="CLU_020728_3_0_6"/>
<dbReference type="OrthoDB" id="9803907at2"/>
<dbReference type="BioCyc" id="SGLO343509:SGP1_RS04790-MONOMER"/>
<dbReference type="UniPathway" id="UPA00142">
    <property type="reaction ID" value="UER00209"/>
</dbReference>
<dbReference type="Proteomes" id="UP000001932">
    <property type="component" value="Chromosome"/>
</dbReference>
<dbReference type="GO" id="GO:0005829">
    <property type="term" value="C:cytosol"/>
    <property type="evidence" value="ECO:0007669"/>
    <property type="project" value="TreeGrafter"/>
</dbReference>
<dbReference type="GO" id="GO:0005524">
    <property type="term" value="F:ATP binding"/>
    <property type="evidence" value="ECO:0007669"/>
    <property type="project" value="UniProtKB-KW"/>
</dbReference>
<dbReference type="GO" id="GO:0004357">
    <property type="term" value="F:glutamate-cysteine ligase activity"/>
    <property type="evidence" value="ECO:0007669"/>
    <property type="project" value="UniProtKB-UniRule"/>
</dbReference>
<dbReference type="GO" id="GO:0046872">
    <property type="term" value="F:metal ion binding"/>
    <property type="evidence" value="ECO:0007669"/>
    <property type="project" value="TreeGrafter"/>
</dbReference>
<dbReference type="GO" id="GO:0006750">
    <property type="term" value="P:glutathione biosynthetic process"/>
    <property type="evidence" value="ECO:0007669"/>
    <property type="project" value="UniProtKB-UniRule"/>
</dbReference>
<dbReference type="FunFam" id="3.30.590.20:FF:000001">
    <property type="entry name" value="Glutamate--cysteine ligase"/>
    <property type="match status" value="1"/>
</dbReference>
<dbReference type="Gene3D" id="3.30.590.20">
    <property type="match status" value="1"/>
</dbReference>
<dbReference type="HAMAP" id="MF_00578">
    <property type="entry name" value="Glu_cys_ligase"/>
    <property type="match status" value="1"/>
</dbReference>
<dbReference type="InterPro" id="IPR014746">
    <property type="entry name" value="Gln_synth/guanido_kin_cat_dom"/>
</dbReference>
<dbReference type="InterPro" id="IPR007370">
    <property type="entry name" value="Glu_cys_ligase"/>
</dbReference>
<dbReference type="InterPro" id="IPR006334">
    <property type="entry name" value="Glut_cys_ligase"/>
</dbReference>
<dbReference type="NCBIfam" id="TIGR01434">
    <property type="entry name" value="glu_cys_ligase"/>
    <property type="match status" value="1"/>
</dbReference>
<dbReference type="PANTHER" id="PTHR38761">
    <property type="entry name" value="GLUTAMATE--CYSTEINE LIGASE"/>
    <property type="match status" value="1"/>
</dbReference>
<dbReference type="PANTHER" id="PTHR38761:SF1">
    <property type="entry name" value="GLUTAMATE--CYSTEINE LIGASE"/>
    <property type="match status" value="1"/>
</dbReference>
<dbReference type="Pfam" id="PF04262">
    <property type="entry name" value="Glu_cys_ligase"/>
    <property type="match status" value="1"/>
</dbReference>
<dbReference type="SUPFAM" id="SSF55931">
    <property type="entry name" value="Glutamine synthetase/guanido kinase"/>
    <property type="match status" value="1"/>
</dbReference>
<feature type="chain" id="PRO_1000025191" description="Glutamate--cysteine ligase">
    <location>
        <begin position="1"/>
        <end position="520"/>
    </location>
</feature>
<proteinExistence type="inferred from homology"/>
<accession>Q2NVK9</accession>
<keyword id="KW-0067">ATP-binding</keyword>
<keyword id="KW-0317">Glutathione biosynthesis</keyword>
<keyword id="KW-0436">Ligase</keyword>
<keyword id="KW-0547">Nucleotide-binding</keyword>
<reference key="1">
    <citation type="journal article" date="2006" name="Genome Res.">
        <title>Massive genome erosion and functional adaptations provide insights into the symbiotic lifestyle of Sodalis glossinidius in the tsetse host.</title>
        <authorList>
            <person name="Toh H."/>
            <person name="Weiss B.L."/>
            <person name="Perkin S.A.H."/>
            <person name="Yamashita A."/>
            <person name="Oshima K."/>
            <person name="Hattori M."/>
            <person name="Aksoy S."/>
        </authorList>
    </citation>
    <scope>NUCLEOTIDE SEQUENCE [LARGE SCALE GENOMIC DNA]</scope>
    <source>
        <strain>morsitans</strain>
    </source>
</reference>